<feature type="chain" id="PRO_0000320538" description="Actin-related protein 8">
    <location>
        <begin position="1"/>
        <end position="624"/>
    </location>
</feature>
<feature type="region of interest" description="Disordered" evidence="3">
    <location>
        <begin position="1"/>
        <end position="29"/>
    </location>
</feature>
<feature type="region of interest" description="Disordered" evidence="3">
    <location>
        <begin position="430"/>
        <end position="462"/>
    </location>
</feature>
<feature type="compositionally biased region" description="Basic and acidic residues" evidence="3">
    <location>
        <begin position="1"/>
        <end position="25"/>
    </location>
</feature>
<feature type="binding site" evidence="1">
    <location>
        <position position="55"/>
    </location>
    <ligand>
        <name>ATP</name>
        <dbReference type="ChEBI" id="CHEBI:30616"/>
    </ligand>
</feature>
<feature type="binding site" evidence="1">
    <location>
        <position position="56"/>
    </location>
    <ligand>
        <name>ATP</name>
        <dbReference type="ChEBI" id="CHEBI:30616"/>
    </ligand>
</feature>
<feature type="binding site" evidence="1">
    <location>
        <begin position="283"/>
        <end position="286"/>
    </location>
    <ligand>
        <name>ATP</name>
        <dbReference type="ChEBI" id="CHEBI:30616"/>
    </ligand>
</feature>
<feature type="modified residue" description="N-acetylmethionine" evidence="2">
    <location>
        <position position="1"/>
    </location>
</feature>
<feature type="modified residue" description="Phosphoserine" evidence="2">
    <location>
        <position position="132"/>
    </location>
</feature>
<feature type="modified residue" description="Phosphoserine" evidence="2">
    <location>
        <position position="412"/>
    </location>
</feature>
<dbReference type="EMBL" id="CR858015">
    <property type="protein sequence ID" value="CAH90256.1"/>
    <property type="molecule type" value="mRNA"/>
</dbReference>
<dbReference type="SMR" id="Q5RDA1"/>
<dbReference type="FunCoup" id="Q5RDA1">
    <property type="interactions" value="3418"/>
</dbReference>
<dbReference type="STRING" id="9601.ENSPPYP00000015423"/>
<dbReference type="eggNOG" id="KOG0797">
    <property type="taxonomic scope" value="Eukaryota"/>
</dbReference>
<dbReference type="InParanoid" id="Q5RDA1"/>
<dbReference type="Proteomes" id="UP000001595">
    <property type="component" value="Unplaced"/>
</dbReference>
<dbReference type="GO" id="GO:0005694">
    <property type="term" value="C:chromosome"/>
    <property type="evidence" value="ECO:0007669"/>
    <property type="project" value="UniProtKB-SubCell"/>
</dbReference>
<dbReference type="GO" id="GO:0005634">
    <property type="term" value="C:nucleus"/>
    <property type="evidence" value="ECO:0007669"/>
    <property type="project" value="UniProtKB-SubCell"/>
</dbReference>
<dbReference type="GO" id="GO:0005524">
    <property type="term" value="F:ATP binding"/>
    <property type="evidence" value="ECO:0007669"/>
    <property type="project" value="UniProtKB-KW"/>
</dbReference>
<dbReference type="GO" id="GO:0051301">
    <property type="term" value="P:cell division"/>
    <property type="evidence" value="ECO:0007669"/>
    <property type="project" value="UniProtKB-KW"/>
</dbReference>
<dbReference type="GO" id="GO:0006310">
    <property type="term" value="P:DNA recombination"/>
    <property type="evidence" value="ECO:0007669"/>
    <property type="project" value="UniProtKB-KW"/>
</dbReference>
<dbReference type="GO" id="GO:0006281">
    <property type="term" value="P:DNA repair"/>
    <property type="evidence" value="ECO:0007669"/>
    <property type="project" value="UniProtKB-KW"/>
</dbReference>
<dbReference type="CDD" id="cd10206">
    <property type="entry name" value="ASKHA_NBD_Arp8-like"/>
    <property type="match status" value="1"/>
</dbReference>
<dbReference type="FunFam" id="3.30.420.40:FF:000100">
    <property type="entry name" value="Actin-related protein 8"/>
    <property type="match status" value="1"/>
</dbReference>
<dbReference type="FunFam" id="3.30.420.40:FF:000134">
    <property type="entry name" value="Actin-related protein 8"/>
    <property type="match status" value="1"/>
</dbReference>
<dbReference type="FunFam" id="3.90.640.10:FF:000020">
    <property type="entry name" value="Actin-related protein 8"/>
    <property type="match status" value="1"/>
</dbReference>
<dbReference type="Gene3D" id="2.30.36.90">
    <property type="match status" value="1"/>
</dbReference>
<dbReference type="Gene3D" id="3.30.420.40">
    <property type="match status" value="2"/>
</dbReference>
<dbReference type="Gene3D" id="3.90.640.10">
    <property type="entry name" value="Actin, Chain A, domain 4"/>
    <property type="match status" value="1"/>
</dbReference>
<dbReference type="InterPro" id="IPR004000">
    <property type="entry name" value="Actin"/>
</dbReference>
<dbReference type="InterPro" id="IPR043129">
    <property type="entry name" value="ATPase_NBD"/>
</dbReference>
<dbReference type="PANTHER" id="PTHR11937">
    <property type="entry name" value="ACTIN"/>
    <property type="match status" value="1"/>
</dbReference>
<dbReference type="Pfam" id="PF00022">
    <property type="entry name" value="Actin"/>
    <property type="match status" value="2"/>
</dbReference>
<dbReference type="SMART" id="SM00268">
    <property type="entry name" value="ACTIN"/>
    <property type="match status" value="1"/>
</dbReference>
<dbReference type="SUPFAM" id="SSF53067">
    <property type="entry name" value="Actin-like ATPase domain"/>
    <property type="match status" value="2"/>
</dbReference>
<organism>
    <name type="scientific">Pongo abelii</name>
    <name type="common">Sumatran orangutan</name>
    <name type="synonym">Pongo pygmaeus abelii</name>
    <dbReference type="NCBI Taxonomy" id="9601"/>
    <lineage>
        <taxon>Eukaryota</taxon>
        <taxon>Metazoa</taxon>
        <taxon>Chordata</taxon>
        <taxon>Craniata</taxon>
        <taxon>Vertebrata</taxon>
        <taxon>Euteleostomi</taxon>
        <taxon>Mammalia</taxon>
        <taxon>Eutheria</taxon>
        <taxon>Euarchontoglires</taxon>
        <taxon>Primates</taxon>
        <taxon>Haplorrhini</taxon>
        <taxon>Catarrhini</taxon>
        <taxon>Hominidae</taxon>
        <taxon>Pongo</taxon>
    </lineage>
</organism>
<accession>Q5RDA1</accession>
<reference key="1">
    <citation type="submission" date="2004-11" db="EMBL/GenBank/DDBJ databases">
        <authorList>
            <consortium name="The German cDNA consortium"/>
        </authorList>
    </citation>
    <scope>NUCLEOTIDE SEQUENCE [LARGE SCALE MRNA]</scope>
    <source>
        <tissue>Kidney</tissue>
    </source>
</reference>
<keyword id="KW-0007">Acetylation</keyword>
<keyword id="KW-0067">ATP-binding</keyword>
<keyword id="KW-0131">Cell cycle</keyword>
<keyword id="KW-0132">Cell division</keyword>
<keyword id="KW-0158">Chromosome</keyword>
<keyword id="KW-0227">DNA damage</keyword>
<keyword id="KW-0233">DNA recombination</keyword>
<keyword id="KW-0234">DNA repair</keyword>
<keyword id="KW-0498">Mitosis</keyword>
<keyword id="KW-0547">Nucleotide-binding</keyword>
<keyword id="KW-0539">Nucleus</keyword>
<keyword id="KW-0597">Phosphoprotein</keyword>
<keyword id="KW-1185">Reference proteome</keyword>
<keyword id="KW-0804">Transcription</keyword>
<keyword id="KW-0805">Transcription regulation</keyword>
<evidence type="ECO:0000250" key="1"/>
<evidence type="ECO:0000250" key="2">
    <source>
        <dbReference type="UniProtKB" id="Q9H981"/>
    </source>
</evidence>
<evidence type="ECO:0000256" key="3">
    <source>
        <dbReference type="SAM" id="MobiDB-lite"/>
    </source>
</evidence>
<evidence type="ECO:0000305" key="4"/>
<gene>
    <name type="primary">ACTR8</name>
    <name type="synonym">ARP8</name>
</gene>
<name>ARP8_PONAB</name>
<sequence length="624" mass="70408">MTQAEKGDTENGKEKGGEKEKEQRGVKRPIVPALVPESLQEQIQSNFIIVIHPGSTTLRIGRATDTLPASIPHVIARRHKQQGQPLYKDSWLLREGLNKPESNEQRQNGLKMVDQAIWSKKMSNGTRRIPVSPEQARSYNKQMRPAILDHCSGNKWTNTSHHPECLVGEEALYVNPLDCYNIHWPIRRGQLNIHPGPGGSLTAVLADIEVIWSHAIQKYLEIPLKDLKYYRCILLIPDIYNKQHVKELVNMILMKMGFSGIVVHQESVCATYGSGLSSTCIVDVGDQKTSVCCVEDGVSHRNTRLCLAYGGSDVSRCFYWLMQRAGFPYRECQLTNKMDCLLLQHLKETFCHLDQDISGLQDHEFQIRHPDSPALLYQFRLGDEKLQAPMALFYPATFGIVGQKMTTLQHRSQGDPEDPHDEHYLLATQSKQEQSAKATADRKSASKPIGFEGDLRGQSSDLPERLHSQEVDLGSAQGDGLMAGNDSEEALTALMSRKTAISLFEGKALGPDKAILHSIDCCSSDDTKKKMYSSILVVGGGLMFHKAQEFLQHRILNKMPPSFRRIIENVDVITRPKDMDPRLIAWKGGAVLACLDTTQELWIYQREWQRFGVRMLRERAAFVW</sequence>
<comment type="function">
    <text evidence="1">Plays an important role in the functional organization of mitotic chromosomes. Exhibits low basal ATPase activity, and unable to polymerize (By similarity).</text>
</comment>
<comment type="function">
    <text evidence="1">Proposed core component of the chromatin remodeling INO80 complex which is involved in transcriptional regulation, DNA replication and probably DNA repair. Required for the recruitment of INO80 (and probably the INO80 complex) to sites of DNA damage Strongly prefer nucleosomes and H3-H4 tetramers over H2A-H2B dimers, suggesting it may act as a nucleosome recognition module within the complex (By similarity).</text>
</comment>
<comment type="subunit">
    <text evidence="1">Component of the chromatin remodeling INO80 complex; specifically part of a complex module associated with the DBINO domain of INO80. Exists as monomers and dimers, but the dimer is most probably the biologically relevant form required for stable interactions with histones that exploits the twofold symmetry of the nucleosome core (By similarity).</text>
</comment>
<comment type="subcellular location">
    <subcellularLocation>
        <location evidence="1">Nucleus</location>
    </subcellularLocation>
    <subcellularLocation>
        <location evidence="1">Chromosome</location>
    </subcellularLocation>
    <text evidence="1">Specifically localizes to mitotic chromosomes.</text>
</comment>
<comment type="similarity">
    <text evidence="4">Belongs to the actin family. ARP8 subfamily.</text>
</comment>
<proteinExistence type="evidence at transcript level"/>
<protein>
    <recommendedName>
        <fullName>Actin-related protein 8</fullName>
    </recommendedName>
</protein>